<protein>
    <recommendedName>
        <fullName>Proteasome subunit alpha</fullName>
    </recommendedName>
    <alternativeName>
        <fullName>Multicatalytic endopeptidase complex subunit alpha</fullName>
    </alternativeName>
</protein>
<keyword id="KW-0963">Cytoplasm</keyword>
<keyword id="KW-0903">Direct protein sequencing</keyword>
<keyword id="KW-0647">Proteasome</keyword>
<organism>
    <name type="scientific">Halococcus dombrowskii</name>
    <dbReference type="NCBI Taxonomy" id="179637"/>
    <lineage>
        <taxon>Archaea</taxon>
        <taxon>Methanobacteriati</taxon>
        <taxon>Methanobacteriota</taxon>
        <taxon>Stenosarchaea group</taxon>
        <taxon>Halobacteria</taxon>
        <taxon>Halobacteriales</taxon>
        <taxon>Halococcaceae</taxon>
        <taxon>Halococcus</taxon>
    </lineage>
</organism>
<comment type="function">
    <text evidence="2">The proteasome is a multicatalytic proteinase complex which is characterized by its ability to cleave peptides with Arg, Phe, Tyr, Leu, and Glu adjacent to the leaving group at neutral or slightly basic pH.</text>
</comment>
<comment type="subunit">
    <text evidence="3">Composed of two subunits, alpha and beta. The complex is formed of four rings. The two outer rings are each composed of seven alpha subunits. The two inner rings are each composed of seven beta subunits (By similarity).</text>
</comment>
<comment type="subcellular location">
    <subcellularLocation>
        <location evidence="1">Cytoplasm</location>
    </subcellularLocation>
</comment>
<comment type="similarity">
    <text evidence="4">Belongs to the peptidase T1A family.</text>
</comment>
<sequence length="12" mass="1306">YGEPIGVETLTK</sequence>
<reference evidence="5" key="1">
    <citation type="submission" date="2006-02" db="UniProtKB">
        <authorList>
            <person name="Legat A."/>
            <person name="Stan-Lotter H."/>
        </authorList>
    </citation>
    <scope>PROTEIN SEQUENCE</scope>
</reference>
<name>PSMA_HALDO</name>
<accession>P84799</accession>
<dbReference type="GO" id="GO:0005737">
    <property type="term" value="C:cytoplasm"/>
    <property type="evidence" value="ECO:0007669"/>
    <property type="project" value="UniProtKB-SubCell"/>
</dbReference>
<dbReference type="GO" id="GO:0019773">
    <property type="term" value="C:proteasome core complex, alpha-subunit complex"/>
    <property type="evidence" value="ECO:0000250"/>
    <property type="project" value="UniProtKB"/>
</dbReference>
<evidence type="ECO:0000250" key="1"/>
<evidence type="ECO:0000250" key="2">
    <source>
        <dbReference type="UniProtKB" id="Q60177"/>
    </source>
</evidence>
<evidence type="ECO:0000250" key="3">
    <source>
        <dbReference type="UniProtKB" id="Q9V2V5"/>
    </source>
</evidence>
<evidence type="ECO:0000255" key="4">
    <source>
        <dbReference type="PROSITE-ProRule" id="PRU00808"/>
    </source>
</evidence>
<evidence type="ECO:0000305" key="5"/>
<proteinExistence type="evidence at protein level"/>
<feature type="chain" id="PRO_0000228814" description="Proteasome subunit alpha">
    <location>
        <begin position="1" status="less than"/>
        <end position="12" status="greater than"/>
    </location>
</feature>
<feature type="non-terminal residue">
    <location>
        <position position="1"/>
    </location>
</feature>
<feature type="non-terminal residue">
    <location>
        <position position="12"/>
    </location>
</feature>